<organism>
    <name type="scientific">Streptomyces avermitilis (strain ATCC 31267 / DSM 46492 / JCM 5070 / NBRC 14893 / NCIMB 12804 / NRRL 8165 / MA-4680)</name>
    <dbReference type="NCBI Taxonomy" id="227882"/>
    <lineage>
        <taxon>Bacteria</taxon>
        <taxon>Bacillati</taxon>
        <taxon>Actinomycetota</taxon>
        <taxon>Actinomycetes</taxon>
        <taxon>Kitasatosporales</taxon>
        <taxon>Streptomycetaceae</taxon>
        <taxon>Streptomyces</taxon>
    </lineage>
</organism>
<protein>
    <recommendedName>
        <fullName evidence="1">Ribonuclease P protein component</fullName>
        <shortName evidence="1">RNase P protein</shortName>
        <shortName evidence="1">RNaseP protein</shortName>
        <ecNumber evidence="1">3.1.26.5</ecNumber>
    </recommendedName>
    <alternativeName>
        <fullName evidence="1">Protein C5</fullName>
    </alternativeName>
</protein>
<sequence>MLPTENRLRRREDFATAVRRGRRAGRPLLVVHLRSGATDPHAPGESAPPTRAGFVVSKAVGGAVVRNKVKRRLRHLMRDRVALLPPGSLVVVRALPGAGDADHAQLAQDLDAALQRLLGGGAR</sequence>
<name>RNPA_STRAW</name>
<proteinExistence type="inferred from homology"/>
<evidence type="ECO:0000255" key="1">
    <source>
        <dbReference type="HAMAP-Rule" id="MF_00227"/>
    </source>
</evidence>
<gene>
    <name evidence="1" type="primary">rnpA</name>
    <name type="ordered locus">SAV_4314</name>
</gene>
<keyword id="KW-0255">Endonuclease</keyword>
<keyword id="KW-0378">Hydrolase</keyword>
<keyword id="KW-0540">Nuclease</keyword>
<keyword id="KW-1185">Reference proteome</keyword>
<keyword id="KW-0694">RNA-binding</keyword>
<keyword id="KW-0819">tRNA processing</keyword>
<dbReference type="EC" id="3.1.26.5" evidence="1"/>
<dbReference type="EMBL" id="BA000030">
    <property type="protein sequence ID" value="BAC72026.1"/>
    <property type="molecule type" value="Genomic_DNA"/>
</dbReference>
<dbReference type="SMR" id="Q82FE0"/>
<dbReference type="KEGG" id="sma:SAVERM_4314"/>
<dbReference type="eggNOG" id="COG0594">
    <property type="taxonomic scope" value="Bacteria"/>
</dbReference>
<dbReference type="HOGENOM" id="CLU_117179_4_1_11"/>
<dbReference type="OrthoDB" id="196964at2"/>
<dbReference type="Proteomes" id="UP000000428">
    <property type="component" value="Chromosome"/>
</dbReference>
<dbReference type="GO" id="GO:0030677">
    <property type="term" value="C:ribonuclease P complex"/>
    <property type="evidence" value="ECO:0007669"/>
    <property type="project" value="TreeGrafter"/>
</dbReference>
<dbReference type="GO" id="GO:0042781">
    <property type="term" value="F:3'-tRNA processing endoribonuclease activity"/>
    <property type="evidence" value="ECO:0007669"/>
    <property type="project" value="TreeGrafter"/>
</dbReference>
<dbReference type="GO" id="GO:0004526">
    <property type="term" value="F:ribonuclease P activity"/>
    <property type="evidence" value="ECO:0007669"/>
    <property type="project" value="UniProtKB-UniRule"/>
</dbReference>
<dbReference type="GO" id="GO:0000049">
    <property type="term" value="F:tRNA binding"/>
    <property type="evidence" value="ECO:0007669"/>
    <property type="project" value="UniProtKB-UniRule"/>
</dbReference>
<dbReference type="GO" id="GO:0001682">
    <property type="term" value="P:tRNA 5'-leader removal"/>
    <property type="evidence" value="ECO:0007669"/>
    <property type="project" value="UniProtKB-UniRule"/>
</dbReference>
<dbReference type="FunFam" id="3.30.230.10:FF:000124">
    <property type="entry name" value="Ribonuclease P protein component"/>
    <property type="match status" value="1"/>
</dbReference>
<dbReference type="Gene3D" id="3.30.230.10">
    <property type="match status" value="1"/>
</dbReference>
<dbReference type="HAMAP" id="MF_00227">
    <property type="entry name" value="RNase_P"/>
    <property type="match status" value="1"/>
</dbReference>
<dbReference type="InterPro" id="IPR020568">
    <property type="entry name" value="Ribosomal_Su5_D2-typ_SF"/>
</dbReference>
<dbReference type="InterPro" id="IPR014721">
    <property type="entry name" value="Ribsml_uS5_D2-typ_fold_subgr"/>
</dbReference>
<dbReference type="InterPro" id="IPR000100">
    <property type="entry name" value="RNase_P"/>
</dbReference>
<dbReference type="InterPro" id="IPR020539">
    <property type="entry name" value="RNase_P_CS"/>
</dbReference>
<dbReference type="NCBIfam" id="TIGR00188">
    <property type="entry name" value="rnpA"/>
    <property type="match status" value="1"/>
</dbReference>
<dbReference type="PANTHER" id="PTHR33992">
    <property type="entry name" value="RIBONUCLEASE P PROTEIN COMPONENT"/>
    <property type="match status" value="1"/>
</dbReference>
<dbReference type="PANTHER" id="PTHR33992:SF1">
    <property type="entry name" value="RIBONUCLEASE P PROTEIN COMPONENT"/>
    <property type="match status" value="1"/>
</dbReference>
<dbReference type="Pfam" id="PF00825">
    <property type="entry name" value="Ribonuclease_P"/>
    <property type="match status" value="1"/>
</dbReference>
<dbReference type="SUPFAM" id="SSF54211">
    <property type="entry name" value="Ribosomal protein S5 domain 2-like"/>
    <property type="match status" value="1"/>
</dbReference>
<dbReference type="PROSITE" id="PS00648">
    <property type="entry name" value="RIBONUCLEASE_P"/>
    <property type="match status" value="1"/>
</dbReference>
<reference key="1">
    <citation type="journal article" date="2001" name="Proc. Natl. Acad. Sci. U.S.A.">
        <title>Genome sequence of an industrial microorganism Streptomyces avermitilis: deducing the ability of producing secondary metabolites.</title>
        <authorList>
            <person name="Omura S."/>
            <person name="Ikeda H."/>
            <person name="Ishikawa J."/>
            <person name="Hanamoto A."/>
            <person name="Takahashi C."/>
            <person name="Shinose M."/>
            <person name="Takahashi Y."/>
            <person name="Horikawa H."/>
            <person name="Nakazawa H."/>
            <person name="Osonoe T."/>
            <person name="Kikuchi H."/>
            <person name="Shiba T."/>
            <person name="Sakaki Y."/>
            <person name="Hattori M."/>
        </authorList>
    </citation>
    <scope>NUCLEOTIDE SEQUENCE [LARGE SCALE GENOMIC DNA]</scope>
    <source>
        <strain>ATCC 31267 / DSM 46492 / JCM 5070 / NBRC 14893 / NCIMB 12804 / NRRL 8165 / MA-4680</strain>
    </source>
</reference>
<reference key="2">
    <citation type="journal article" date="2003" name="Nat. Biotechnol.">
        <title>Complete genome sequence and comparative analysis of the industrial microorganism Streptomyces avermitilis.</title>
        <authorList>
            <person name="Ikeda H."/>
            <person name="Ishikawa J."/>
            <person name="Hanamoto A."/>
            <person name="Shinose M."/>
            <person name="Kikuchi H."/>
            <person name="Shiba T."/>
            <person name="Sakaki Y."/>
            <person name="Hattori M."/>
            <person name="Omura S."/>
        </authorList>
    </citation>
    <scope>NUCLEOTIDE SEQUENCE [LARGE SCALE GENOMIC DNA]</scope>
    <source>
        <strain>ATCC 31267 / DSM 46492 / JCM 5070 / NBRC 14893 / NCIMB 12804 / NRRL 8165 / MA-4680</strain>
    </source>
</reference>
<accession>Q82FE0</accession>
<feature type="chain" id="PRO_0000198536" description="Ribonuclease P protein component">
    <location>
        <begin position="1"/>
        <end position="123"/>
    </location>
</feature>
<comment type="function">
    <text evidence="1">RNaseP catalyzes the removal of the 5'-leader sequence from pre-tRNA to produce the mature 5'-terminus. It can also cleave other RNA substrates such as 4.5S RNA. The protein component plays an auxiliary but essential role in vivo by binding to the 5'-leader sequence and broadening the substrate specificity of the ribozyme.</text>
</comment>
<comment type="catalytic activity">
    <reaction evidence="1">
        <text>Endonucleolytic cleavage of RNA, removing 5'-extranucleotides from tRNA precursor.</text>
        <dbReference type="EC" id="3.1.26.5"/>
    </reaction>
</comment>
<comment type="subunit">
    <text evidence="1">Consists of a catalytic RNA component (M1 or rnpB) and a protein subunit.</text>
</comment>
<comment type="similarity">
    <text evidence="1">Belongs to the RnpA family.</text>
</comment>